<proteinExistence type="inferred from homology"/>
<feature type="chain" id="PRO_0000387642" description="Acetaldehyde dehydrogenase">
    <location>
        <begin position="1"/>
        <end position="297"/>
    </location>
</feature>
<feature type="active site" description="Acyl-thioester intermediate" evidence="1">
    <location>
        <position position="130"/>
    </location>
</feature>
<feature type="binding site" evidence="1">
    <location>
        <begin position="15"/>
        <end position="18"/>
    </location>
    <ligand>
        <name>NAD(+)</name>
        <dbReference type="ChEBI" id="CHEBI:57540"/>
    </ligand>
</feature>
<feature type="binding site" evidence="1">
    <location>
        <begin position="162"/>
        <end position="170"/>
    </location>
    <ligand>
        <name>NAD(+)</name>
        <dbReference type="ChEBI" id="CHEBI:57540"/>
    </ligand>
</feature>
<feature type="binding site" evidence="1">
    <location>
        <position position="272"/>
    </location>
    <ligand>
        <name>NAD(+)</name>
        <dbReference type="ChEBI" id="CHEBI:57540"/>
    </ligand>
</feature>
<name>ACDH_BURTA</name>
<reference key="1">
    <citation type="journal article" date="2005" name="BMC Genomics">
        <title>Bacterial genome adaptation to niches: divergence of the potential virulence genes in three Burkholderia species of different survival strategies.</title>
        <authorList>
            <person name="Kim H.S."/>
            <person name="Schell M.A."/>
            <person name="Yu Y."/>
            <person name="Ulrich R.L."/>
            <person name="Sarria S.H."/>
            <person name="Nierman W.C."/>
            <person name="DeShazer D."/>
        </authorList>
    </citation>
    <scope>NUCLEOTIDE SEQUENCE [LARGE SCALE GENOMIC DNA]</scope>
    <source>
        <strain>ATCC 700388 / DSM 13276 / CCUG 48851 / CIP 106301 / E264</strain>
    </source>
</reference>
<keyword id="KW-0058">Aromatic hydrocarbons catabolism</keyword>
<keyword id="KW-0520">NAD</keyword>
<keyword id="KW-0560">Oxidoreductase</keyword>
<comment type="catalytic activity">
    <reaction evidence="1">
        <text>acetaldehyde + NAD(+) + CoA = acetyl-CoA + NADH + H(+)</text>
        <dbReference type="Rhea" id="RHEA:23288"/>
        <dbReference type="ChEBI" id="CHEBI:15343"/>
        <dbReference type="ChEBI" id="CHEBI:15378"/>
        <dbReference type="ChEBI" id="CHEBI:57287"/>
        <dbReference type="ChEBI" id="CHEBI:57288"/>
        <dbReference type="ChEBI" id="CHEBI:57540"/>
        <dbReference type="ChEBI" id="CHEBI:57945"/>
        <dbReference type="EC" id="1.2.1.10"/>
    </reaction>
</comment>
<comment type="similarity">
    <text evidence="1">Belongs to the acetaldehyde dehydrogenase family.</text>
</comment>
<accession>Q2T7T0</accession>
<protein>
    <recommendedName>
        <fullName evidence="1">Acetaldehyde dehydrogenase</fullName>
        <ecNumber evidence="1">1.2.1.10</ecNumber>
    </recommendedName>
    <alternativeName>
        <fullName evidence="1">Acetaldehyde dehydrogenase [acetylating]</fullName>
    </alternativeName>
</protein>
<gene>
    <name type="primary">mhpF</name>
    <name type="ordered locus">BTH_II0569</name>
</gene>
<organism>
    <name type="scientific">Burkholderia thailandensis (strain ATCC 700388 / DSM 13276 / CCUG 48851 / CIP 106301 / E264)</name>
    <dbReference type="NCBI Taxonomy" id="271848"/>
    <lineage>
        <taxon>Bacteria</taxon>
        <taxon>Pseudomonadati</taxon>
        <taxon>Pseudomonadota</taxon>
        <taxon>Betaproteobacteria</taxon>
        <taxon>Burkholderiales</taxon>
        <taxon>Burkholderiaceae</taxon>
        <taxon>Burkholderia</taxon>
        <taxon>pseudomallei group</taxon>
    </lineage>
</organism>
<sequence>MKNKSSRTRVAILGSGSIGLDLMFKVKASEHFDLKFVVGRHANSDGLKLARSCNVETSSDGLDFLKENEDAYDLVFDATSAAAHKVNNGFFSGAGKFVIDLTPAKLGRLCVPCINLDDIGAEQNVNLITCGGQASLPLAYALKQAVDEIEYLEVVSAIASRSAGIATRENIDEYMTTTEYALAQFSGAKKTKAILNINPAEPGVRMQTTLYAHARYRDFDRVRACVAEMVEKVREYVPGYRLVVEPIESQGRITISLTVRGRGDYLPEYAGNLDIINCAALAVASHRHATARLGATQ</sequence>
<dbReference type="EC" id="1.2.1.10" evidence="1"/>
<dbReference type="EMBL" id="CP000085">
    <property type="protein sequence ID" value="ABC35657.1"/>
    <property type="molecule type" value="Genomic_DNA"/>
</dbReference>
<dbReference type="RefSeq" id="WP_009907290.1">
    <property type="nucleotide sequence ID" value="NZ_CP008786.1"/>
</dbReference>
<dbReference type="SMR" id="Q2T7T0"/>
<dbReference type="GeneID" id="45118063"/>
<dbReference type="KEGG" id="bte:BTH_II0569"/>
<dbReference type="HOGENOM" id="CLU_062208_0_0_4"/>
<dbReference type="Proteomes" id="UP000001930">
    <property type="component" value="Chromosome II"/>
</dbReference>
<dbReference type="GO" id="GO:0008774">
    <property type="term" value="F:acetaldehyde dehydrogenase (acetylating) activity"/>
    <property type="evidence" value="ECO:0007669"/>
    <property type="project" value="UniProtKB-UniRule"/>
</dbReference>
<dbReference type="GO" id="GO:0051287">
    <property type="term" value="F:NAD binding"/>
    <property type="evidence" value="ECO:0007669"/>
    <property type="project" value="UniProtKB-UniRule"/>
</dbReference>
<dbReference type="GO" id="GO:0009056">
    <property type="term" value="P:catabolic process"/>
    <property type="evidence" value="ECO:0007669"/>
    <property type="project" value="UniProtKB-KW"/>
</dbReference>
<dbReference type="CDD" id="cd23933">
    <property type="entry name" value="ALDH_C"/>
    <property type="match status" value="1"/>
</dbReference>
<dbReference type="Gene3D" id="3.30.360.10">
    <property type="entry name" value="Dihydrodipicolinate Reductase, domain 2"/>
    <property type="match status" value="1"/>
</dbReference>
<dbReference type="Gene3D" id="3.40.50.720">
    <property type="entry name" value="NAD(P)-binding Rossmann-like Domain"/>
    <property type="match status" value="1"/>
</dbReference>
<dbReference type="HAMAP" id="MF_01657">
    <property type="entry name" value="Ac_ald_DH_ac"/>
    <property type="match status" value="1"/>
</dbReference>
<dbReference type="InterPro" id="IPR003361">
    <property type="entry name" value="Acetaldehyde_dehydrogenase"/>
</dbReference>
<dbReference type="InterPro" id="IPR015426">
    <property type="entry name" value="Acetylaldehyde_DH_C"/>
</dbReference>
<dbReference type="InterPro" id="IPR036291">
    <property type="entry name" value="NAD(P)-bd_dom_sf"/>
</dbReference>
<dbReference type="InterPro" id="IPR000534">
    <property type="entry name" value="Semialdehyde_DH_NAD-bd"/>
</dbReference>
<dbReference type="NCBIfam" id="TIGR03215">
    <property type="entry name" value="ac_ald_DH_ac"/>
    <property type="match status" value="1"/>
</dbReference>
<dbReference type="NCBIfam" id="NF006157">
    <property type="entry name" value="PRK08300.1"/>
    <property type="match status" value="1"/>
</dbReference>
<dbReference type="Pfam" id="PF09290">
    <property type="entry name" value="AcetDehyd-dimer"/>
    <property type="match status" value="1"/>
</dbReference>
<dbReference type="PIRSF" id="PIRSF015689">
    <property type="entry name" value="Actaldh_dh_actl"/>
    <property type="match status" value="1"/>
</dbReference>
<dbReference type="SMART" id="SM00859">
    <property type="entry name" value="Semialdhyde_dh"/>
    <property type="match status" value="1"/>
</dbReference>
<dbReference type="SUPFAM" id="SSF55347">
    <property type="entry name" value="Glyceraldehyde-3-phosphate dehydrogenase-like, C-terminal domain"/>
    <property type="match status" value="1"/>
</dbReference>
<dbReference type="SUPFAM" id="SSF51735">
    <property type="entry name" value="NAD(P)-binding Rossmann-fold domains"/>
    <property type="match status" value="1"/>
</dbReference>
<evidence type="ECO:0000255" key="1">
    <source>
        <dbReference type="HAMAP-Rule" id="MF_01657"/>
    </source>
</evidence>